<gene>
    <name evidence="1" type="primary">rplQ</name>
    <name type="ordered locus">BMA2604</name>
</gene>
<name>RL17_BURMA</name>
<accession>Q62GN2</accession>
<sequence>MRHRHGLRKLNRTSSHRLAMLRNMSNSLIEHEVIKTTLPKAKELRKVVEPLITLGKKPSLANRRLAFNRLRDRDSVAKLFDVLGPRFANRPGGYLRILKFGFRVGDNAPMALVELLDRPEVEETENVQEAE</sequence>
<keyword id="KW-1185">Reference proteome</keyword>
<keyword id="KW-0687">Ribonucleoprotein</keyword>
<keyword id="KW-0689">Ribosomal protein</keyword>
<feature type="chain" id="PRO_0000267844" description="Large ribosomal subunit protein bL17">
    <location>
        <begin position="1"/>
        <end position="131"/>
    </location>
</feature>
<proteinExistence type="inferred from homology"/>
<reference key="1">
    <citation type="journal article" date="2004" name="Proc. Natl. Acad. Sci. U.S.A.">
        <title>Structural flexibility in the Burkholderia mallei genome.</title>
        <authorList>
            <person name="Nierman W.C."/>
            <person name="DeShazer D."/>
            <person name="Kim H.S."/>
            <person name="Tettelin H."/>
            <person name="Nelson K.E."/>
            <person name="Feldblyum T.V."/>
            <person name="Ulrich R.L."/>
            <person name="Ronning C.M."/>
            <person name="Brinkac L.M."/>
            <person name="Daugherty S.C."/>
            <person name="Davidsen T.D."/>
            <person name="DeBoy R.T."/>
            <person name="Dimitrov G."/>
            <person name="Dodson R.J."/>
            <person name="Durkin A.S."/>
            <person name="Gwinn M.L."/>
            <person name="Haft D.H."/>
            <person name="Khouri H.M."/>
            <person name="Kolonay J.F."/>
            <person name="Madupu R."/>
            <person name="Mohammoud Y."/>
            <person name="Nelson W.C."/>
            <person name="Radune D."/>
            <person name="Romero C.M."/>
            <person name="Sarria S."/>
            <person name="Selengut J."/>
            <person name="Shamblin C."/>
            <person name="Sullivan S.A."/>
            <person name="White O."/>
            <person name="Yu Y."/>
            <person name="Zafar N."/>
            <person name="Zhou L."/>
            <person name="Fraser C.M."/>
        </authorList>
    </citation>
    <scope>NUCLEOTIDE SEQUENCE [LARGE SCALE GENOMIC DNA]</scope>
    <source>
        <strain>ATCC 23344</strain>
    </source>
</reference>
<evidence type="ECO:0000255" key="1">
    <source>
        <dbReference type="HAMAP-Rule" id="MF_01368"/>
    </source>
</evidence>
<evidence type="ECO:0000305" key="2"/>
<protein>
    <recommendedName>
        <fullName evidence="1">Large ribosomal subunit protein bL17</fullName>
    </recommendedName>
    <alternativeName>
        <fullName evidence="2">50S ribosomal protein L17</fullName>
    </alternativeName>
</protein>
<dbReference type="EMBL" id="CP000010">
    <property type="protein sequence ID" value="AAU47843.1"/>
    <property type="molecule type" value="Genomic_DNA"/>
</dbReference>
<dbReference type="RefSeq" id="WP_004197924.1">
    <property type="nucleotide sequence ID" value="NC_006348.1"/>
</dbReference>
<dbReference type="RefSeq" id="YP_104139.1">
    <property type="nucleotide sequence ID" value="NC_006348.1"/>
</dbReference>
<dbReference type="SMR" id="Q62GN2"/>
<dbReference type="GeneID" id="93061805"/>
<dbReference type="KEGG" id="bma:BMA2604"/>
<dbReference type="PATRIC" id="fig|243160.12.peg.2676"/>
<dbReference type="eggNOG" id="COG0203">
    <property type="taxonomic scope" value="Bacteria"/>
</dbReference>
<dbReference type="HOGENOM" id="CLU_074407_2_0_4"/>
<dbReference type="Proteomes" id="UP000006693">
    <property type="component" value="Chromosome 1"/>
</dbReference>
<dbReference type="GO" id="GO:0022625">
    <property type="term" value="C:cytosolic large ribosomal subunit"/>
    <property type="evidence" value="ECO:0007669"/>
    <property type="project" value="TreeGrafter"/>
</dbReference>
<dbReference type="GO" id="GO:0003735">
    <property type="term" value="F:structural constituent of ribosome"/>
    <property type="evidence" value="ECO:0007669"/>
    <property type="project" value="InterPro"/>
</dbReference>
<dbReference type="GO" id="GO:0006412">
    <property type="term" value="P:translation"/>
    <property type="evidence" value="ECO:0007669"/>
    <property type="project" value="UniProtKB-UniRule"/>
</dbReference>
<dbReference type="FunFam" id="3.90.1030.10:FF:000001">
    <property type="entry name" value="50S ribosomal protein L17"/>
    <property type="match status" value="1"/>
</dbReference>
<dbReference type="Gene3D" id="3.90.1030.10">
    <property type="entry name" value="Ribosomal protein L17"/>
    <property type="match status" value="1"/>
</dbReference>
<dbReference type="HAMAP" id="MF_01368">
    <property type="entry name" value="Ribosomal_bL17"/>
    <property type="match status" value="1"/>
</dbReference>
<dbReference type="InterPro" id="IPR000456">
    <property type="entry name" value="Ribosomal_bL17"/>
</dbReference>
<dbReference type="InterPro" id="IPR047859">
    <property type="entry name" value="Ribosomal_bL17_CS"/>
</dbReference>
<dbReference type="InterPro" id="IPR036373">
    <property type="entry name" value="Ribosomal_bL17_sf"/>
</dbReference>
<dbReference type="NCBIfam" id="TIGR00059">
    <property type="entry name" value="L17"/>
    <property type="match status" value="1"/>
</dbReference>
<dbReference type="PANTHER" id="PTHR14413:SF16">
    <property type="entry name" value="LARGE RIBOSOMAL SUBUNIT PROTEIN BL17M"/>
    <property type="match status" value="1"/>
</dbReference>
<dbReference type="PANTHER" id="PTHR14413">
    <property type="entry name" value="RIBOSOMAL PROTEIN L17"/>
    <property type="match status" value="1"/>
</dbReference>
<dbReference type="Pfam" id="PF01196">
    <property type="entry name" value="Ribosomal_L17"/>
    <property type="match status" value="1"/>
</dbReference>
<dbReference type="SUPFAM" id="SSF64263">
    <property type="entry name" value="Prokaryotic ribosomal protein L17"/>
    <property type="match status" value="1"/>
</dbReference>
<dbReference type="PROSITE" id="PS01167">
    <property type="entry name" value="RIBOSOMAL_L17"/>
    <property type="match status" value="1"/>
</dbReference>
<organism>
    <name type="scientific">Burkholderia mallei (strain ATCC 23344)</name>
    <dbReference type="NCBI Taxonomy" id="243160"/>
    <lineage>
        <taxon>Bacteria</taxon>
        <taxon>Pseudomonadati</taxon>
        <taxon>Pseudomonadota</taxon>
        <taxon>Betaproteobacteria</taxon>
        <taxon>Burkholderiales</taxon>
        <taxon>Burkholderiaceae</taxon>
        <taxon>Burkholderia</taxon>
        <taxon>pseudomallei group</taxon>
    </lineage>
</organism>
<comment type="subunit">
    <text evidence="1">Part of the 50S ribosomal subunit. Contacts protein L32.</text>
</comment>
<comment type="similarity">
    <text evidence="1">Belongs to the bacterial ribosomal protein bL17 family.</text>
</comment>